<name>PRSR2_MOUSE</name>
<proteinExistence type="evidence at protein level"/>
<reference key="1">
    <citation type="journal article" date="2005" name="Science">
        <title>The transcriptional landscape of the mammalian genome.</title>
        <authorList>
            <person name="Carninci P."/>
            <person name="Kasukawa T."/>
            <person name="Katayama S."/>
            <person name="Gough J."/>
            <person name="Frith M.C."/>
            <person name="Maeda N."/>
            <person name="Oyama R."/>
            <person name="Ravasi T."/>
            <person name="Lenhard B."/>
            <person name="Wells C."/>
            <person name="Kodzius R."/>
            <person name="Shimokawa K."/>
            <person name="Bajic V.B."/>
            <person name="Brenner S.E."/>
            <person name="Batalov S."/>
            <person name="Forrest A.R."/>
            <person name="Zavolan M."/>
            <person name="Davis M.J."/>
            <person name="Wilming L.G."/>
            <person name="Aidinis V."/>
            <person name="Allen J.E."/>
            <person name="Ambesi-Impiombato A."/>
            <person name="Apweiler R."/>
            <person name="Aturaliya R.N."/>
            <person name="Bailey T.L."/>
            <person name="Bansal M."/>
            <person name="Baxter L."/>
            <person name="Beisel K.W."/>
            <person name="Bersano T."/>
            <person name="Bono H."/>
            <person name="Chalk A.M."/>
            <person name="Chiu K.P."/>
            <person name="Choudhary V."/>
            <person name="Christoffels A."/>
            <person name="Clutterbuck D.R."/>
            <person name="Crowe M.L."/>
            <person name="Dalla E."/>
            <person name="Dalrymple B.P."/>
            <person name="de Bono B."/>
            <person name="Della Gatta G."/>
            <person name="di Bernardo D."/>
            <person name="Down T."/>
            <person name="Engstrom P."/>
            <person name="Fagiolini M."/>
            <person name="Faulkner G."/>
            <person name="Fletcher C.F."/>
            <person name="Fukushima T."/>
            <person name="Furuno M."/>
            <person name="Futaki S."/>
            <person name="Gariboldi M."/>
            <person name="Georgii-Hemming P."/>
            <person name="Gingeras T.R."/>
            <person name="Gojobori T."/>
            <person name="Green R.E."/>
            <person name="Gustincich S."/>
            <person name="Harbers M."/>
            <person name="Hayashi Y."/>
            <person name="Hensch T.K."/>
            <person name="Hirokawa N."/>
            <person name="Hill D."/>
            <person name="Huminiecki L."/>
            <person name="Iacono M."/>
            <person name="Ikeo K."/>
            <person name="Iwama A."/>
            <person name="Ishikawa T."/>
            <person name="Jakt M."/>
            <person name="Kanapin A."/>
            <person name="Katoh M."/>
            <person name="Kawasawa Y."/>
            <person name="Kelso J."/>
            <person name="Kitamura H."/>
            <person name="Kitano H."/>
            <person name="Kollias G."/>
            <person name="Krishnan S.P."/>
            <person name="Kruger A."/>
            <person name="Kummerfeld S.K."/>
            <person name="Kurochkin I.V."/>
            <person name="Lareau L.F."/>
            <person name="Lazarevic D."/>
            <person name="Lipovich L."/>
            <person name="Liu J."/>
            <person name="Liuni S."/>
            <person name="McWilliam S."/>
            <person name="Madan Babu M."/>
            <person name="Madera M."/>
            <person name="Marchionni L."/>
            <person name="Matsuda H."/>
            <person name="Matsuzawa S."/>
            <person name="Miki H."/>
            <person name="Mignone F."/>
            <person name="Miyake S."/>
            <person name="Morris K."/>
            <person name="Mottagui-Tabar S."/>
            <person name="Mulder N."/>
            <person name="Nakano N."/>
            <person name="Nakauchi H."/>
            <person name="Ng P."/>
            <person name="Nilsson R."/>
            <person name="Nishiguchi S."/>
            <person name="Nishikawa S."/>
            <person name="Nori F."/>
            <person name="Ohara O."/>
            <person name="Okazaki Y."/>
            <person name="Orlando V."/>
            <person name="Pang K.C."/>
            <person name="Pavan W.J."/>
            <person name="Pavesi G."/>
            <person name="Pesole G."/>
            <person name="Petrovsky N."/>
            <person name="Piazza S."/>
            <person name="Reed J."/>
            <person name="Reid J.F."/>
            <person name="Ring B.Z."/>
            <person name="Ringwald M."/>
            <person name="Rost B."/>
            <person name="Ruan Y."/>
            <person name="Salzberg S.L."/>
            <person name="Sandelin A."/>
            <person name="Schneider C."/>
            <person name="Schoenbach C."/>
            <person name="Sekiguchi K."/>
            <person name="Semple C.A."/>
            <person name="Seno S."/>
            <person name="Sessa L."/>
            <person name="Sheng Y."/>
            <person name="Shibata Y."/>
            <person name="Shimada H."/>
            <person name="Shimada K."/>
            <person name="Silva D."/>
            <person name="Sinclair B."/>
            <person name="Sperling S."/>
            <person name="Stupka E."/>
            <person name="Sugiura K."/>
            <person name="Sultana R."/>
            <person name="Takenaka Y."/>
            <person name="Taki K."/>
            <person name="Tammoja K."/>
            <person name="Tan S.L."/>
            <person name="Tang S."/>
            <person name="Taylor M.S."/>
            <person name="Tegner J."/>
            <person name="Teichmann S.A."/>
            <person name="Ueda H.R."/>
            <person name="van Nimwegen E."/>
            <person name="Verardo R."/>
            <person name="Wei C.L."/>
            <person name="Yagi K."/>
            <person name="Yamanishi H."/>
            <person name="Zabarovsky E."/>
            <person name="Zhu S."/>
            <person name="Zimmer A."/>
            <person name="Hide W."/>
            <person name="Bult C."/>
            <person name="Grimmond S.M."/>
            <person name="Teasdale R.D."/>
            <person name="Liu E.T."/>
            <person name="Brusic V."/>
            <person name="Quackenbush J."/>
            <person name="Wahlestedt C."/>
            <person name="Mattick J.S."/>
            <person name="Hume D.A."/>
            <person name="Kai C."/>
            <person name="Sasaki D."/>
            <person name="Tomaru Y."/>
            <person name="Fukuda S."/>
            <person name="Kanamori-Katayama M."/>
            <person name="Suzuki M."/>
            <person name="Aoki J."/>
            <person name="Arakawa T."/>
            <person name="Iida J."/>
            <person name="Imamura K."/>
            <person name="Itoh M."/>
            <person name="Kato T."/>
            <person name="Kawaji H."/>
            <person name="Kawagashira N."/>
            <person name="Kawashima T."/>
            <person name="Kojima M."/>
            <person name="Kondo S."/>
            <person name="Konno H."/>
            <person name="Nakano K."/>
            <person name="Ninomiya N."/>
            <person name="Nishio T."/>
            <person name="Okada M."/>
            <person name="Plessy C."/>
            <person name="Shibata K."/>
            <person name="Shiraki T."/>
            <person name="Suzuki S."/>
            <person name="Tagami M."/>
            <person name="Waki K."/>
            <person name="Watahiki A."/>
            <person name="Okamura-Oho Y."/>
            <person name="Suzuki H."/>
            <person name="Kawai J."/>
            <person name="Hayashizaki Y."/>
        </authorList>
    </citation>
    <scope>NUCLEOTIDE SEQUENCE [LARGE SCALE MRNA]</scope>
    <source>
        <strain>C57BL/6J</strain>
        <tissue>Head</tissue>
    </source>
</reference>
<reference key="2">
    <citation type="journal article" date="2009" name="PLoS Biol.">
        <title>Lineage-specific biology revealed by a finished genome assembly of the mouse.</title>
        <authorList>
            <person name="Church D.M."/>
            <person name="Goodstadt L."/>
            <person name="Hillier L.W."/>
            <person name="Zody M.C."/>
            <person name="Goldstein S."/>
            <person name="She X."/>
            <person name="Bult C.J."/>
            <person name="Agarwala R."/>
            <person name="Cherry J.L."/>
            <person name="DiCuccio M."/>
            <person name="Hlavina W."/>
            <person name="Kapustin Y."/>
            <person name="Meric P."/>
            <person name="Maglott D."/>
            <person name="Birtle Z."/>
            <person name="Marques A.C."/>
            <person name="Graves T."/>
            <person name="Zhou S."/>
            <person name="Teague B."/>
            <person name="Potamousis K."/>
            <person name="Churas C."/>
            <person name="Place M."/>
            <person name="Herschleb J."/>
            <person name="Runnheim R."/>
            <person name="Forrest D."/>
            <person name="Amos-Landgraf J."/>
            <person name="Schwartz D.C."/>
            <person name="Cheng Z."/>
            <person name="Lindblad-Toh K."/>
            <person name="Eichler E.E."/>
            <person name="Ponting C.P."/>
        </authorList>
    </citation>
    <scope>NUCLEOTIDE SEQUENCE [LARGE SCALE GENOMIC DNA]</scope>
    <source>
        <strain>C57BL/6J</strain>
    </source>
</reference>
<reference key="3">
    <citation type="submission" date="2005-07" db="EMBL/GenBank/DDBJ databases">
        <authorList>
            <person name="Mural R.J."/>
            <person name="Adams M.D."/>
            <person name="Myers E.W."/>
            <person name="Smith H.O."/>
            <person name="Venter J.C."/>
        </authorList>
    </citation>
    <scope>NUCLEOTIDE SEQUENCE [LARGE SCALE GENOMIC DNA]</scope>
</reference>
<reference key="4">
    <citation type="journal article" date="2004" name="Genome Res.">
        <title>The status, quality, and expansion of the NIH full-length cDNA project: the Mammalian Gene Collection (MGC).</title>
        <authorList>
            <consortium name="The MGC Project Team"/>
        </authorList>
    </citation>
    <scope>NUCLEOTIDE SEQUENCE [LARGE SCALE MRNA]</scope>
    <source>
        <strain>Czech II</strain>
        <strain>FVB/N</strain>
        <tissue>Mammary gland</tissue>
    </source>
</reference>
<reference key="5">
    <citation type="journal article" date="2010" name="Cell">
        <title>A tissue-specific atlas of mouse protein phosphorylation and expression.</title>
        <authorList>
            <person name="Huttlin E.L."/>
            <person name="Jedrychowski M.P."/>
            <person name="Elias J.E."/>
            <person name="Goswami T."/>
            <person name="Rad R."/>
            <person name="Beausoleil S.A."/>
            <person name="Villen J."/>
            <person name="Haas W."/>
            <person name="Sowa M.E."/>
            <person name="Gygi S.P."/>
        </authorList>
    </citation>
    <scope>PHOSPHORYLATION [LARGE SCALE ANALYSIS] AT SER-220 AND SER-223</scope>
    <scope>IDENTIFICATION BY MASS SPECTROMETRY [LARGE SCALE ANALYSIS]</scope>
    <source>
        <tissue>Kidney</tissue>
        <tissue>Spleen</tissue>
    </source>
</reference>
<sequence length="471" mass="50421">MPGNQQKPESLETDSDTSPSCGLSDLSRGGSLESRCSSSRSRSFTMDDESLKHLTHEEKDVILFFEETLDSLEYDFDEPALCDSGIHCHSPQSLEESPSSHSEPEDVIDLVQPAPASGEAESLPDMPQVTGAPSDTKHGTPFLEGGKQAAENSLPPPDSRGPEVFPLPPSLPVPAPSAPRKELMSPSPPAEHPKLLRSVPTPLVIAQKISEKLAGNEALSPTSPSKEGRPGEWRTPTSPASRNGDHVGVWHRHTTQSAPKVHRFPSNISVTNSAGKDFNKTISKAAVNVQERKAQVLANINGMSFIAAGDTSSEERWQKAEEQRSGSADGARTLGRAGMAGEPGAPCAGVPARAQQSRAVQTEQPPALANGFQSVHEALRSEPSSFVPTSKTITFRPDPAVTGKLARQNASRSLYEPRPDGSQDARKRTGSLPRAVGFRPQGITVQFSGRGSTEEARREALRKLGLLKENL</sequence>
<keyword id="KW-0488">Methylation</keyword>
<keyword id="KW-0597">Phosphoprotein</keyword>
<keyword id="KW-1185">Reference proteome</keyword>
<comment type="sequence caution" evidence="3">
    <conflict type="erroneous initiation">
        <sequence resource="EMBL-CDS" id="AAH26904"/>
    </conflict>
    <text>Extended N-terminus.</text>
</comment>
<accession>Q8C5R2</accession>
<accession>Q3V1L9</accession>
<accession>Q8R017</accession>
<accession>Q8R2Z9</accession>
<evidence type="ECO:0000250" key="1">
    <source>
        <dbReference type="UniProtKB" id="Q86WR7"/>
    </source>
</evidence>
<evidence type="ECO:0000256" key="2">
    <source>
        <dbReference type="SAM" id="MobiDB-lite"/>
    </source>
</evidence>
<evidence type="ECO:0000305" key="3"/>
<evidence type="ECO:0007744" key="4">
    <source>
    </source>
</evidence>
<dbReference type="EMBL" id="AK077380">
    <property type="protein sequence ID" value="BAC36776.1"/>
    <property type="molecule type" value="mRNA"/>
</dbReference>
<dbReference type="EMBL" id="AK132370">
    <property type="protein sequence ID" value="BAE21131.1"/>
    <property type="molecule type" value="mRNA"/>
</dbReference>
<dbReference type="EMBL" id="AL928735">
    <property type="status" value="NOT_ANNOTATED_CDS"/>
    <property type="molecule type" value="Genomic_DNA"/>
</dbReference>
<dbReference type="EMBL" id="CH466542">
    <property type="protein sequence ID" value="EDL07978.1"/>
    <property type="molecule type" value="Genomic_DNA"/>
</dbReference>
<dbReference type="EMBL" id="BC023193">
    <property type="protein sequence ID" value="AAH23193.1"/>
    <property type="molecule type" value="mRNA"/>
</dbReference>
<dbReference type="EMBL" id="BC025867">
    <property type="protein sequence ID" value="AAH25867.1"/>
    <property type="molecule type" value="mRNA"/>
</dbReference>
<dbReference type="EMBL" id="BC026904">
    <property type="protein sequence ID" value="AAH26904.1"/>
    <property type="status" value="ALT_INIT"/>
    <property type="molecule type" value="mRNA"/>
</dbReference>
<dbReference type="CCDS" id="CCDS15671.1"/>
<dbReference type="RefSeq" id="NP_001153129.1">
    <property type="nucleotide sequence ID" value="NM_001159657.2"/>
</dbReference>
<dbReference type="RefSeq" id="NP_659132.2">
    <property type="nucleotide sequence ID" value="NM_144883.5"/>
</dbReference>
<dbReference type="RefSeq" id="XP_011237278.1">
    <property type="nucleotide sequence ID" value="XM_011238976.4"/>
</dbReference>
<dbReference type="SMR" id="Q8C5R2"/>
<dbReference type="FunCoup" id="Q8C5R2">
    <property type="interactions" value="15"/>
</dbReference>
<dbReference type="STRING" id="10090.ENSMUSP00000110592"/>
<dbReference type="GlyGen" id="Q8C5R2">
    <property type="glycosylation" value="1 site, 1 O-linked glycan (1 site)"/>
</dbReference>
<dbReference type="iPTMnet" id="Q8C5R2"/>
<dbReference type="PhosphoSitePlus" id="Q8C5R2"/>
<dbReference type="PaxDb" id="10090-ENSMUSP00000060780"/>
<dbReference type="ProteomicsDB" id="291535"/>
<dbReference type="Antibodypedia" id="52497">
    <property type="antibodies" value="52 antibodies from 12 providers"/>
</dbReference>
<dbReference type="Ensembl" id="ENSMUST00000054254.12">
    <property type="protein sequence ID" value="ENSMUSP00000060780.6"/>
    <property type="gene ID" value="ENSMUSG00000045319.14"/>
</dbReference>
<dbReference type="Ensembl" id="ENSMUST00000114942.9">
    <property type="protein sequence ID" value="ENSMUSP00000110592.3"/>
    <property type="gene ID" value="ENSMUSG00000045319.14"/>
</dbReference>
<dbReference type="GeneID" id="227545"/>
<dbReference type="KEGG" id="mmu:227545"/>
<dbReference type="UCSC" id="uc008ige.2">
    <property type="organism name" value="mouse"/>
</dbReference>
<dbReference type="AGR" id="MGI:2442238"/>
<dbReference type="CTD" id="254427"/>
<dbReference type="MGI" id="MGI:2442238">
    <property type="gene designation" value="Proser2"/>
</dbReference>
<dbReference type="VEuPathDB" id="HostDB:ENSMUSG00000045319"/>
<dbReference type="eggNOG" id="ENOG502QWQ9">
    <property type="taxonomic scope" value="Eukaryota"/>
</dbReference>
<dbReference type="GeneTree" id="ENSGT00940000154315"/>
<dbReference type="HOGENOM" id="CLU_050385_0_0_1"/>
<dbReference type="InParanoid" id="Q8C5R2"/>
<dbReference type="OMA" id="RQPDCGQ"/>
<dbReference type="OrthoDB" id="8725016at2759"/>
<dbReference type="TreeFam" id="TF335482"/>
<dbReference type="BioGRID-ORCS" id="227545">
    <property type="hits" value="1 hit in 75 CRISPR screens"/>
</dbReference>
<dbReference type="ChiTaRS" id="Proser2">
    <property type="organism name" value="mouse"/>
</dbReference>
<dbReference type="PRO" id="PR:Q8C5R2"/>
<dbReference type="Proteomes" id="UP000000589">
    <property type="component" value="Chromosome 2"/>
</dbReference>
<dbReference type="RNAct" id="Q8C5R2">
    <property type="molecule type" value="protein"/>
</dbReference>
<dbReference type="Bgee" id="ENSMUSG00000045319">
    <property type="expression patterns" value="Expressed in epithelium of lens and 174 other cell types or tissues"/>
</dbReference>
<dbReference type="ExpressionAtlas" id="Q8C5R2">
    <property type="expression patterns" value="baseline and differential"/>
</dbReference>
<dbReference type="PANTHER" id="PTHR16095:SF9">
    <property type="entry name" value="PROLINE AND SERINE-RICH PROTEIN 2"/>
    <property type="match status" value="1"/>
</dbReference>
<dbReference type="PANTHER" id="PTHR16095">
    <property type="entry name" value="TRANSMEMBRANE PROTEIN 143 FAMILY MEMBER"/>
    <property type="match status" value="1"/>
</dbReference>
<dbReference type="Pfam" id="PF15385">
    <property type="entry name" value="SARG"/>
    <property type="match status" value="1"/>
</dbReference>
<gene>
    <name type="primary">Proser2</name>
</gene>
<protein>
    <recommendedName>
        <fullName>Proline and serine-rich protein 2</fullName>
    </recommendedName>
</protein>
<feature type="chain" id="PRO_0000089793" description="Proline and serine-rich protein 2">
    <location>
        <begin position="1"/>
        <end position="471"/>
    </location>
</feature>
<feature type="region of interest" description="Disordered" evidence="2">
    <location>
        <begin position="1"/>
        <end position="46"/>
    </location>
</feature>
<feature type="region of interest" description="Disordered" evidence="2">
    <location>
        <begin position="82"/>
        <end position="247"/>
    </location>
</feature>
<feature type="region of interest" description="Disordered" evidence="2">
    <location>
        <begin position="310"/>
        <end position="365"/>
    </location>
</feature>
<feature type="region of interest" description="Disordered" evidence="2">
    <location>
        <begin position="383"/>
        <end position="437"/>
    </location>
</feature>
<feature type="compositionally biased region" description="Low complexity" evidence="2">
    <location>
        <begin position="26"/>
        <end position="43"/>
    </location>
</feature>
<feature type="compositionally biased region" description="Low complexity" evidence="2">
    <location>
        <begin position="90"/>
        <end position="101"/>
    </location>
</feature>
<feature type="compositionally biased region" description="Pro residues" evidence="2">
    <location>
        <begin position="154"/>
        <end position="177"/>
    </location>
</feature>
<feature type="compositionally biased region" description="Basic and acidic residues" evidence="2">
    <location>
        <begin position="313"/>
        <end position="324"/>
    </location>
</feature>
<feature type="compositionally biased region" description="Polar residues" evidence="2">
    <location>
        <begin position="354"/>
        <end position="364"/>
    </location>
</feature>
<feature type="compositionally biased region" description="Polar residues" evidence="2">
    <location>
        <begin position="383"/>
        <end position="393"/>
    </location>
</feature>
<feature type="compositionally biased region" description="Basic and acidic residues" evidence="2">
    <location>
        <begin position="415"/>
        <end position="427"/>
    </location>
</feature>
<feature type="modified residue" description="Phosphoserine" evidence="1">
    <location>
        <position position="43"/>
    </location>
</feature>
<feature type="modified residue" description="Phosphothreonine" evidence="1">
    <location>
        <position position="45"/>
    </location>
</feature>
<feature type="modified residue" description="Phosphoserine" evidence="1">
    <location>
        <position position="187"/>
    </location>
</feature>
<feature type="modified residue" description="Phosphoserine" evidence="4">
    <location>
        <position position="220"/>
    </location>
</feature>
<feature type="modified residue" description="Phosphoserine" evidence="4">
    <location>
        <position position="223"/>
    </location>
</feature>
<feature type="modified residue" description="Asymmetric dimethylarginine; alternate" evidence="1">
    <location>
        <position position="263"/>
    </location>
</feature>
<feature type="modified residue" description="Omega-N-methylarginine; alternate" evidence="1">
    <location>
        <position position="263"/>
    </location>
</feature>
<feature type="modified residue" description="Phosphoserine" evidence="1">
    <location>
        <position position="431"/>
    </location>
</feature>
<feature type="modified residue" description="Omega-N-methylarginine" evidence="1">
    <location>
        <position position="450"/>
    </location>
</feature>
<feature type="sequence conflict" description="In Ref. 4; AAH23193/AAH25867." evidence="3" ref="4">
    <original>T</original>
    <variation>I</variation>
    <location>
        <position position="222"/>
    </location>
</feature>
<feature type="sequence conflict" description="In Ref. 2; AAH26904." evidence="3" ref="2">
    <original>V</original>
    <variation>M</variation>
    <location>
        <position position="249"/>
    </location>
</feature>
<feature type="sequence conflict" description="In Ref. 2; AAH26904." evidence="3" ref="2">
    <original>C</original>
    <variation>R</variation>
    <location>
        <position position="347"/>
    </location>
</feature>
<feature type="sequence conflict" description="In Ref. 2; AAH26904." evidence="3" ref="2">
    <original>I</original>
    <variation>N</variation>
    <location>
        <position position="443"/>
    </location>
</feature>
<organism>
    <name type="scientific">Mus musculus</name>
    <name type="common">Mouse</name>
    <dbReference type="NCBI Taxonomy" id="10090"/>
    <lineage>
        <taxon>Eukaryota</taxon>
        <taxon>Metazoa</taxon>
        <taxon>Chordata</taxon>
        <taxon>Craniata</taxon>
        <taxon>Vertebrata</taxon>
        <taxon>Euteleostomi</taxon>
        <taxon>Mammalia</taxon>
        <taxon>Eutheria</taxon>
        <taxon>Euarchontoglires</taxon>
        <taxon>Glires</taxon>
        <taxon>Rodentia</taxon>
        <taxon>Myomorpha</taxon>
        <taxon>Muroidea</taxon>
        <taxon>Muridae</taxon>
        <taxon>Murinae</taxon>
        <taxon>Mus</taxon>
        <taxon>Mus</taxon>
    </lineage>
</organism>